<gene>
    <name evidence="1" type="primary">murB</name>
    <name type="ordered locus">NWMN_0707</name>
</gene>
<name>MURB_STAAE</name>
<feature type="chain" id="PRO_1000071043" description="UDP-N-acetylenolpyruvoylglucosamine reductase">
    <location>
        <begin position="1"/>
        <end position="307"/>
    </location>
</feature>
<feature type="domain" description="FAD-binding PCMH-type" evidence="1">
    <location>
        <begin position="33"/>
        <end position="197"/>
    </location>
</feature>
<feature type="active site" evidence="1">
    <location>
        <position position="176"/>
    </location>
</feature>
<feature type="active site" description="Proton donor" evidence="1">
    <location>
        <position position="226"/>
    </location>
</feature>
<feature type="active site" evidence="1">
    <location>
        <position position="296"/>
    </location>
</feature>
<accession>A6QF47</accession>
<keyword id="KW-0131">Cell cycle</keyword>
<keyword id="KW-0132">Cell division</keyword>
<keyword id="KW-0133">Cell shape</keyword>
<keyword id="KW-0961">Cell wall biogenesis/degradation</keyword>
<keyword id="KW-0963">Cytoplasm</keyword>
<keyword id="KW-0274">FAD</keyword>
<keyword id="KW-0285">Flavoprotein</keyword>
<keyword id="KW-0521">NADP</keyword>
<keyword id="KW-0560">Oxidoreductase</keyword>
<keyword id="KW-0573">Peptidoglycan synthesis</keyword>
<evidence type="ECO:0000255" key="1">
    <source>
        <dbReference type="HAMAP-Rule" id="MF_00037"/>
    </source>
</evidence>
<protein>
    <recommendedName>
        <fullName evidence="1">UDP-N-acetylenolpyruvoylglucosamine reductase</fullName>
        <ecNumber evidence="1">1.3.1.98</ecNumber>
    </recommendedName>
    <alternativeName>
        <fullName evidence="1">UDP-N-acetylmuramate dehydrogenase</fullName>
    </alternativeName>
</protein>
<comment type="function">
    <text evidence="1">Cell wall formation.</text>
</comment>
<comment type="catalytic activity">
    <reaction evidence="1">
        <text>UDP-N-acetyl-alpha-D-muramate + NADP(+) = UDP-N-acetyl-3-O-(1-carboxyvinyl)-alpha-D-glucosamine + NADPH + H(+)</text>
        <dbReference type="Rhea" id="RHEA:12248"/>
        <dbReference type="ChEBI" id="CHEBI:15378"/>
        <dbReference type="ChEBI" id="CHEBI:57783"/>
        <dbReference type="ChEBI" id="CHEBI:58349"/>
        <dbReference type="ChEBI" id="CHEBI:68483"/>
        <dbReference type="ChEBI" id="CHEBI:70757"/>
        <dbReference type="EC" id="1.3.1.98"/>
    </reaction>
</comment>
<comment type="cofactor">
    <cofactor evidence="1">
        <name>FAD</name>
        <dbReference type="ChEBI" id="CHEBI:57692"/>
    </cofactor>
</comment>
<comment type="pathway">
    <text evidence="1">Cell wall biogenesis; peptidoglycan biosynthesis.</text>
</comment>
<comment type="subcellular location">
    <subcellularLocation>
        <location evidence="1">Cytoplasm</location>
    </subcellularLocation>
</comment>
<comment type="similarity">
    <text evidence="1">Belongs to the MurB family.</text>
</comment>
<sequence>MINKDIYQALQQLIPNEKIKVDEPLKRYTYTKTGGNADFYITPTKNEEVQAVVKYAYQNEIPVTYLGNGSNIIIREGGIRGIVISLLSLDHIEVSDDAIIAGSGAAIIDVSRVARDYALTGLEFACGIPGSIGGAVYMNAGAYGGEVKDCIDYALCVNEQGSLIKLTTKELELDYRNSIIQKEHLVVLEAAFTLAPGKMTEIQAKMDDLTERRESKQPLEYPSCGSVFQRPPGHFAGKLIQDSNLQGHRIGGVEVSTKHAGFMVNVDNGTATDYENLIHYVQKTVKEKFGIELNREVRIIGEHPKES</sequence>
<proteinExistence type="inferred from homology"/>
<dbReference type="EC" id="1.3.1.98" evidence="1"/>
<dbReference type="EMBL" id="AP009351">
    <property type="protein sequence ID" value="BAF66979.1"/>
    <property type="molecule type" value="Genomic_DNA"/>
</dbReference>
<dbReference type="RefSeq" id="WP_000608440.1">
    <property type="nucleotide sequence ID" value="NZ_JBBIAE010000002.1"/>
</dbReference>
<dbReference type="SMR" id="A6QF47"/>
<dbReference type="KEGG" id="sae:NWMN_0707"/>
<dbReference type="HOGENOM" id="CLU_035304_1_1_9"/>
<dbReference type="UniPathway" id="UPA00219"/>
<dbReference type="Proteomes" id="UP000006386">
    <property type="component" value="Chromosome"/>
</dbReference>
<dbReference type="GO" id="GO:0005829">
    <property type="term" value="C:cytosol"/>
    <property type="evidence" value="ECO:0007669"/>
    <property type="project" value="TreeGrafter"/>
</dbReference>
<dbReference type="GO" id="GO:0071949">
    <property type="term" value="F:FAD binding"/>
    <property type="evidence" value="ECO:0007669"/>
    <property type="project" value="InterPro"/>
</dbReference>
<dbReference type="GO" id="GO:0008762">
    <property type="term" value="F:UDP-N-acetylmuramate dehydrogenase activity"/>
    <property type="evidence" value="ECO:0007669"/>
    <property type="project" value="UniProtKB-UniRule"/>
</dbReference>
<dbReference type="GO" id="GO:0051301">
    <property type="term" value="P:cell division"/>
    <property type="evidence" value="ECO:0007669"/>
    <property type="project" value="UniProtKB-KW"/>
</dbReference>
<dbReference type="GO" id="GO:0071555">
    <property type="term" value="P:cell wall organization"/>
    <property type="evidence" value="ECO:0007669"/>
    <property type="project" value="UniProtKB-KW"/>
</dbReference>
<dbReference type="GO" id="GO:0009252">
    <property type="term" value="P:peptidoglycan biosynthetic process"/>
    <property type="evidence" value="ECO:0007669"/>
    <property type="project" value="UniProtKB-UniRule"/>
</dbReference>
<dbReference type="GO" id="GO:0008360">
    <property type="term" value="P:regulation of cell shape"/>
    <property type="evidence" value="ECO:0007669"/>
    <property type="project" value="UniProtKB-KW"/>
</dbReference>
<dbReference type="FunFam" id="3.90.78.10:FF:000001">
    <property type="entry name" value="UDP-N-acetylenolpyruvoylglucosamine reductase"/>
    <property type="match status" value="1"/>
</dbReference>
<dbReference type="Gene3D" id="3.30.465.10">
    <property type="match status" value="1"/>
</dbReference>
<dbReference type="Gene3D" id="3.90.78.10">
    <property type="entry name" value="UDP-N-acetylenolpyruvoylglucosamine reductase, C-terminal domain"/>
    <property type="match status" value="1"/>
</dbReference>
<dbReference type="Gene3D" id="3.30.43.10">
    <property type="entry name" value="Uridine Diphospho-n-acetylenolpyruvylglucosamine Reductase, domain 2"/>
    <property type="match status" value="1"/>
</dbReference>
<dbReference type="HAMAP" id="MF_00037">
    <property type="entry name" value="MurB"/>
    <property type="match status" value="1"/>
</dbReference>
<dbReference type="InterPro" id="IPR016166">
    <property type="entry name" value="FAD-bd_PCMH"/>
</dbReference>
<dbReference type="InterPro" id="IPR036318">
    <property type="entry name" value="FAD-bd_PCMH-like_sf"/>
</dbReference>
<dbReference type="InterPro" id="IPR016167">
    <property type="entry name" value="FAD-bd_PCMH_sub1"/>
</dbReference>
<dbReference type="InterPro" id="IPR016169">
    <property type="entry name" value="FAD-bd_PCMH_sub2"/>
</dbReference>
<dbReference type="InterPro" id="IPR003170">
    <property type="entry name" value="MurB"/>
</dbReference>
<dbReference type="InterPro" id="IPR011601">
    <property type="entry name" value="MurB_C"/>
</dbReference>
<dbReference type="InterPro" id="IPR036635">
    <property type="entry name" value="MurB_C_sf"/>
</dbReference>
<dbReference type="InterPro" id="IPR006094">
    <property type="entry name" value="Oxid_FAD_bind_N"/>
</dbReference>
<dbReference type="NCBIfam" id="TIGR00179">
    <property type="entry name" value="murB"/>
    <property type="match status" value="1"/>
</dbReference>
<dbReference type="NCBIfam" id="NF010480">
    <property type="entry name" value="PRK13905.1"/>
    <property type="match status" value="1"/>
</dbReference>
<dbReference type="PANTHER" id="PTHR21071">
    <property type="entry name" value="UDP-N-ACETYLENOLPYRUVOYLGLUCOSAMINE REDUCTASE"/>
    <property type="match status" value="1"/>
</dbReference>
<dbReference type="PANTHER" id="PTHR21071:SF4">
    <property type="entry name" value="UDP-N-ACETYLENOLPYRUVOYLGLUCOSAMINE REDUCTASE"/>
    <property type="match status" value="1"/>
</dbReference>
<dbReference type="Pfam" id="PF01565">
    <property type="entry name" value="FAD_binding_4"/>
    <property type="match status" value="1"/>
</dbReference>
<dbReference type="Pfam" id="PF02873">
    <property type="entry name" value="MurB_C"/>
    <property type="match status" value="1"/>
</dbReference>
<dbReference type="SUPFAM" id="SSF56176">
    <property type="entry name" value="FAD-binding/transporter-associated domain-like"/>
    <property type="match status" value="1"/>
</dbReference>
<dbReference type="SUPFAM" id="SSF56194">
    <property type="entry name" value="Uridine diphospho-N-Acetylenolpyruvylglucosamine reductase, MurB, C-terminal domain"/>
    <property type="match status" value="1"/>
</dbReference>
<dbReference type="PROSITE" id="PS51387">
    <property type="entry name" value="FAD_PCMH"/>
    <property type="match status" value="1"/>
</dbReference>
<organism>
    <name type="scientific">Staphylococcus aureus (strain Newman)</name>
    <dbReference type="NCBI Taxonomy" id="426430"/>
    <lineage>
        <taxon>Bacteria</taxon>
        <taxon>Bacillati</taxon>
        <taxon>Bacillota</taxon>
        <taxon>Bacilli</taxon>
        <taxon>Bacillales</taxon>
        <taxon>Staphylococcaceae</taxon>
        <taxon>Staphylococcus</taxon>
    </lineage>
</organism>
<reference key="1">
    <citation type="journal article" date="2008" name="J. Bacteriol.">
        <title>Genome sequence of Staphylococcus aureus strain Newman and comparative analysis of staphylococcal genomes: polymorphism and evolution of two major pathogenicity islands.</title>
        <authorList>
            <person name="Baba T."/>
            <person name="Bae T."/>
            <person name="Schneewind O."/>
            <person name="Takeuchi F."/>
            <person name="Hiramatsu K."/>
        </authorList>
    </citation>
    <scope>NUCLEOTIDE SEQUENCE [LARGE SCALE GENOMIC DNA]</scope>
    <source>
        <strain>Newman</strain>
    </source>
</reference>